<sequence>MELDEVIITRAIFDEYSKTFLDYTEVDVALIGGGPANLVAARYLAEAGAKVAIYEQKLSLGGGMWAGGMMFPRIVVQEEACRILDDFGIRYKEYQPGYYVANSVESVGKLISGATSAGAEVFNLVSFEDVMIRENDRVTGIVVNWGPVTVQRLHVDPLMIRTKLVIDGTGHEAVVCNTILRKIPNAKIGNLGKLGEKPMWSEVGEQLVVDATKEIYPGLIVAGMAANAATCSPRMGPVFGGMLLSGEKAAKLALEKLKEL</sequence>
<keyword id="KW-0408">Iron</keyword>
<keyword id="KW-0479">Metal-binding</keyword>
<keyword id="KW-0520">NAD</keyword>
<keyword id="KW-0784">Thiamine biosynthesis</keyword>
<keyword id="KW-0808">Transferase</keyword>
<dbReference type="EC" id="2.4.2.59" evidence="1"/>
<dbReference type="EMBL" id="CP000099">
    <property type="protein sequence ID" value="AAZ71031.1"/>
    <property type="molecule type" value="Genomic_DNA"/>
</dbReference>
<dbReference type="SMR" id="Q46AR1"/>
<dbReference type="STRING" id="269797.Mbar_A2100"/>
<dbReference type="PaxDb" id="269797-Mbar_A2100"/>
<dbReference type="KEGG" id="mba:Mbar_A2100"/>
<dbReference type="eggNOG" id="arCOG00574">
    <property type="taxonomic scope" value="Archaea"/>
</dbReference>
<dbReference type="HOGENOM" id="CLU_053727_2_0_2"/>
<dbReference type="OrthoDB" id="4240at2157"/>
<dbReference type="UniPathway" id="UPA00060"/>
<dbReference type="GO" id="GO:0005506">
    <property type="term" value="F:iron ion binding"/>
    <property type="evidence" value="ECO:0007669"/>
    <property type="project" value="UniProtKB-UniRule"/>
</dbReference>
<dbReference type="GO" id="GO:0016763">
    <property type="term" value="F:pentosyltransferase activity"/>
    <property type="evidence" value="ECO:0007669"/>
    <property type="project" value="UniProtKB-UniRule"/>
</dbReference>
<dbReference type="GO" id="GO:0009228">
    <property type="term" value="P:thiamine biosynthetic process"/>
    <property type="evidence" value="ECO:0007669"/>
    <property type="project" value="UniProtKB-KW"/>
</dbReference>
<dbReference type="GO" id="GO:0009229">
    <property type="term" value="P:thiamine diphosphate biosynthetic process"/>
    <property type="evidence" value="ECO:0007669"/>
    <property type="project" value="UniProtKB-UniRule"/>
</dbReference>
<dbReference type="GO" id="GO:0052837">
    <property type="term" value="P:thiazole biosynthetic process"/>
    <property type="evidence" value="ECO:0007669"/>
    <property type="project" value="UniProtKB-UniRule"/>
</dbReference>
<dbReference type="Gene3D" id="3.50.50.60">
    <property type="entry name" value="FAD/NAD(P)-binding domain"/>
    <property type="match status" value="1"/>
</dbReference>
<dbReference type="HAMAP" id="MF_00304">
    <property type="entry name" value="Thi4"/>
    <property type="match status" value="1"/>
</dbReference>
<dbReference type="InterPro" id="IPR036188">
    <property type="entry name" value="FAD/NAD-bd_sf"/>
</dbReference>
<dbReference type="InterPro" id="IPR002922">
    <property type="entry name" value="Thi4_fam"/>
</dbReference>
<dbReference type="InterPro" id="IPR022828">
    <property type="entry name" value="Thi4_prok"/>
</dbReference>
<dbReference type="NCBIfam" id="TIGR00292">
    <property type="entry name" value="sulfide-dependent adenosine diphosphate thiazole synthase"/>
    <property type="match status" value="1"/>
</dbReference>
<dbReference type="PANTHER" id="PTHR43422">
    <property type="entry name" value="THIAMINE THIAZOLE SYNTHASE"/>
    <property type="match status" value="1"/>
</dbReference>
<dbReference type="PANTHER" id="PTHR43422:SF3">
    <property type="entry name" value="THIAMINE THIAZOLE SYNTHASE"/>
    <property type="match status" value="1"/>
</dbReference>
<dbReference type="Pfam" id="PF01946">
    <property type="entry name" value="Thi4"/>
    <property type="match status" value="1"/>
</dbReference>
<dbReference type="PRINTS" id="PR00419">
    <property type="entry name" value="ADXRDTASE"/>
</dbReference>
<dbReference type="SUPFAM" id="SSF51905">
    <property type="entry name" value="FAD/NAD(P)-binding domain"/>
    <property type="match status" value="1"/>
</dbReference>
<name>THI4_METBF</name>
<organism>
    <name type="scientific">Methanosarcina barkeri (strain Fusaro / DSM 804)</name>
    <dbReference type="NCBI Taxonomy" id="269797"/>
    <lineage>
        <taxon>Archaea</taxon>
        <taxon>Methanobacteriati</taxon>
        <taxon>Methanobacteriota</taxon>
        <taxon>Stenosarchaea group</taxon>
        <taxon>Methanomicrobia</taxon>
        <taxon>Methanosarcinales</taxon>
        <taxon>Methanosarcinaceae</taxon>
        <taxon>Methanosarcina</taxon>
    </lineage>
</organism>
<gene>
    <name evidence="1" type="primary">thi4</name>
    <name type="ordered locus">Mbar_A2100</name>
</gene>
<comment type="function">
    <text evidence="1">Involved in the biosynthesis of the thiazole moiety of thiamine. Catalyzes the conversion of NAD and glycine to adenosine diphosphate 5-(2-hydroxyethyl)-4-methylthiazole-2-carboxylate (ADT), an adenylated thiazole intermediate, using free sulfide as a source of sulfur.</text>
</comment>
<comment type="catalytic activity">
    <reaction evidence="1">
        <text>hydrogen sulfide + glycine + NAD(+) = ADP-5-ethyl-4-methylthiazole-2-carboxylate + nicotinamide + 3 H2O + H(+)</text>
        <dbReference type="Rhea" id="RHEA:55704"/>
        <dbReference type="ChEBI" id="CHEBI:15377"/>
        <dbReference type="ChEBI" id="CHEBI:15378"/>
        <dbReference type="ChEBI" id="CHEBI:17154"/>
        <dbReference type="ChEBI" id="CHEBI:29919"/>
        <dbReference type="ChEBI" id="CHEBI:57305"/>
        <dbReference type="ChEBI" id="CHEBI:57540"/>
        <dbReference type="ChEBI" id="CHEBI:139151"/>
        <dbReference type="EC" id="2.4.2.59"/>
    </reaction>
</comment>
<comment type="cofactor">
    <cofactor evidence="1">
        <name>Fe(2+)</name>
        <dbReference type="ChEBI" id="CHEBI:29033"/>
    </cofactor>
</comment>
<comment type="pathway">
    <text evidence="1">Cofactor biosynthesis; thiamine diphosphate biosynthesis.</text>
</comment>
<comment type="subunit">
    <text evidence="1">Homooctamer; tetramer of dimers.</text>
</comment>
<comment type="similarity">
    <text evidence="1">Belongs to the THI4 family.</text>
</comment>
<reference key="1">
    <citation type="journal article" date="2006" name="J. Bacteriol.">
        <title>The Methanosarcina barkeri genome: comparative analysis with Methanosarcina acetivorans and Methanosarcina mazei reveals extensive rearrangement within methanosarcinal genomes.</title>
        <authorList>
            <person name="Maeder D.L."/>
            <person name="Anderson I."/>
            <person name="Brettin T.S."/>
            <person name="Bruce D.C."/>
            <person name="Gilna P."/>
            <person name="Han C.S."/>
            <person name="Lapidus A."/>
            <person name="Metcalf W.W."/>
            <person name="Saunders E."/>
            <person name="Tapia R."/>
            <person name="Sowers K.R."/>
        </authorList>
    </citation>
    <scope>NUCLEOTIDE SEQUENCE [LARGE SCALE GENOMIC DNA]</scope>
    <source>
        <strain>Fusaro / DSM 804</strain>
    </source>
</reference>
<feature type="chain" id="PRO_0000259381" description="Thiamine thiazole synthase">
    <location>
        <begin position="1"/>
        <end position="260"/>
    </location>
</feature>
<feature type="binding site" description="in other chain" evidence="1">
    <location>
        <position position="36"/>
    </location>
    <ligand>
        <name>NAD(+)</name>
        <dbReference type="ChEBI" id="CHEBI:57540"/>
        <note>ligand shared between two adjacent protomers</note>
    </ligand>
</feature>
<feature type="binding site" description="in other chain" evidence="1">
    <location>
        <begin position="55"/>
        <end position="56"/>
    </location>
    <ligand>
        <name>NAD(+)</name>
        <dbReference type="ChEBI" id="CHEBI:57540"/>
        <note>ligand shared between two adjacent protomers</note>
    </ligand>
</feature>
<feature type="binding site" description="in other chain" evidence="1">
    <location>
        <position position="63"/>
    </location>
    <ligand>
        <name>NAD(+)</name>
        <dbReference type="ChEBI" id="CHEBI:57540"/>
        <note>ligand shared between two adjacent protomers</note>
    </ligand>
</feature>
<feature type="binding site" evidence="1">
    <location>
        <begin position="154"/>
        <end position="156"/>
    </location>
    <ligand>
        <name>NAD(+)</name>
        <dbReference type="ChEBI" id="CHEBI:57540"/>
        <note>ligand shared between two adjacent protomers</note>
    </ligand>
</feature>
<feature type="binding site" evidence="1">
    <location>
        <position position="156"/>
    </location>
    <ligand>
        <name>Fe cation</name>
        <dbReference type="ChEBI" id="CHEBI:24875"/>
        <note>ligand shared between two adjacent protomers</note>
    </ligand>
</feature>
<feature type="binding site" description="in other chain" evidence="1">
    <location>
        <position position="171"/>
    </location>
    <ligand>
        <name>Fe cation</name>
        <dbReference type="ChEBI" id="CHEBI:24875"/>
        <note>ligand shared between two adjacent protomers</note>
    </ligand>
</feature>
<feature type="binding site" description="in other chain" evidence="1">
    <location>
        <position position="224"/>
    </location>
    <ligand>
        <name>NAD(+)</name>
        <dbReference type="ChEBI" id="CHEBI:57540"/>
        <note>ligand shared between two adjacent protomers</note>
    </ligand>
</feature>
<feature type="binding site" evidence="1">
    <location>
        <position position="234"/>
    </location>
    <ligand>
        <name>glycine</name>
        <dbReference type="ChEBI" id="CHEBI:57305"/>
    </ligand>
</feature>
<accession>Q46AR1</accession>
<protein>
    <recommendedName>
        <fullName evidence="1">Thiamine thiazole synthase</fullName>
        <ecNumber evidence="1">2.4.2.59</ecNumber>
    </recommendedName>
</protein>
<proteinExistence type="inferred from homology"/>
<evidence type="ECO:0000255" key="1">
    <source>
        <dbReference type="HAMAP-Rule" id="MF_00304"/>
    </source>
</evidence>